<accession>P41287</accession>
<name>CYB_CAPMR</name>
<gene>
    <name type="primary">MT-CYB</name>
    <name type="synonym">COB</name>
    <name type="synonym">CYTB</name>
    <name type="synonym">MTCYB</name>
</gene>
<evidence type="ECO:0000250" key="1"/>
<evidence type="ECO:0000250" key="2">
    <source>
        <dbReference type="UniProtKB" id="P00157"/>
    </source>
</evidence>
<evidence type="ECO:0000255" key="3">
    <source>
        <dbReference type="PROSITE-ProRule" id="PRU00967"/>
    </source>
</evidence>
<evidence type="ECO:0000255" key="4">
    <source>
        <dbReference type="PROSITE-ProRule" id="PRU00968"/>
    </source>
</evidence>
<geneLocation type="mitochondrion"/>
<sequence length="379" mass="42913">MTNIRKTHPLMKIINNAFIDLPTPSNISSWWNFGSLLGLCLIMQILTGLFLAMHYTPDTTTAFSSVTHICRDVNYGWVIRYLHANGASMFFICIYAHMGRGLYYGSHAFRETWNIGVILLFTTMATAFVGYVLPWGQMSFWGATVITNLLSAIPYIGTTLVEWIWGGFSVDKATLTRFFAFHFILPFIILALAAVHLLFLHETGSNNPTGIPSNMDKIPFHPYYTIKDILGVLLLILTLLMLTLFTPDLLGDPDNYTPANPLSTPAHIKPEWYFLFAYAILRSIPNKLGGVLALLFSILILALIPMLHTSKQRSMMFRPFSQFLFWVLVADLLTLTWIGGQPVEHPYVMVGQLASILYFFLILILMPVTSLIENKLMKW</sequence>
<comment type="function">
    <text evidence="2">Component of the ubiquinol-cytochrome c reductase complex (complex III or cytochrome b-c1 complex) that is part of the mitochondrial respiratory chain. The b-c1 complex mediates electron transfer from ubiquinol to cytochrome c. Contributes to the generation of a proton gradient across the mitochondrial membrane that is then used for ATP synthesis.</text>
</comment>
<comment type="cofactor">
    <cofactor evidence="2">
        <name>heme b</name>
        <dbReference type="ChEBI" id="CHEBI:60344"/>
    </cofactor>
    <text evidence="2">Binds 2 heme b groups non-covalently.</text>
</comment>
<comment type="subunit">
    <text evidence="2">The cytochrome bc1 complex contains 11 subunits: 3 respiratory subunits (MT-CYB, CYC1 and UQCRFS1), 2 core proteins (UQCRC1 and UQCRC2) and 6 low-molecular weight proteins (UQCRH/QCR6, UQCRB/QCR7, UQCRQ/QCR8, UQCR10/QCR9, UQCR11/QCR10 and a cleavage product of UQCRFS1). This cytochrome bc1 complex then forms a dimer.</text>
</comment>
<comment type="subcellular location">
    <subcellularLocation>
        <location evidence="2">Mitochondrion inner membrane</location>
        <topology evidence="2">Multi-pass membrane protein</topology>
    </subcellularLocation>
</comment>
<comment type="miscellaneous">
    <text evidence="1">Heme 1 (or BL or b562) is low-potential and absorbs at about 562 nm, and heme 2 (or BH or b566) is high-potential and absorbs at about 566 nm.</text>
</comment>
<comment type="similarity">
    <text evidence="3 4">Belongs to the cytochrome b family.</text>
</comment>
<comment type="caution">
    <text evidence="2">The full-length protein contains only eight transmembrane helices, not nine as predicted by bioinformatics tools.</text>
</comment>
<feature type="chain" id="PRO_0000060727" description="Cytochrome b">
    <location>
        <begin position="1"/>
        <end position="379"/>
    </location>
</feature>
<feature type="transmembrane region" description="Helical" evidence="2">
    <location>
        <begin position="33"/>
        <end position="53"/>
    </location>
</feature>
<feature type="transmembrane region" description="Helical" evidence="2">
    <location>
        <begin position="77"/>
        <end position="98"/>
    </location>
</feature>
<feature type="transmembrane region" description="Helical" evidence="2">
    <location>
        <begin position="113"/>
        <end position="133"/>
    </location>
</feature>
<feature type="transmembrane region" description="Helical" evidence="2">
    <location>
        <begin position="178"/>
        <end position="198"/>
    </location>
</feature>
<feature type="transmembrane region" description="Helical" evidence="2">
    <location>
        <begin position="226"/>
        <end position="246"/>
    </location>
</feature>
<feature type="transmembrane region" description="Helical" evidence="2">
    <location>
        <begin position="288"/>
        <end position="308"/>
    </location>
</feature>
<feature type="transmembrane region" description="Helical" evidence="2">
    <location>
        <begin position="320"/>
        <end position="340"/>
    </location>
</feature>
<feature type="transmembrane region" description="Helical" evidence="2">
    <location>
        <begin position="347"/>
        <end position="367"/>
    </location>
</feature>
<feature type="binding site" description="axial binding residue" evidence="2">
    <location>
        <position position="83"/>
    </location>
    <ligand>
        <name>heme b</name>
        <dbReference type="ChEBI" id="CHEBI:60344"/>
        <label>b562</label>
    </ligand>
    <ligandPart>
        <name>Fe</name>
        <dbReference type="ChEBI" id="CHEBI:18248"/>
    </ligandPart>
</feature>
<feature type="binding site" description="axial binding residue" evidence="2">
    <location>
        <position position="97"/>
    </location>
    <ligand>
        <name>heme b</name>
        <dbReference type="ChEBI" id="CHEBI:60344"/>
        <label>b566</label>
    </ligand>
    <ligandPart>
        <name>Fe</name>
        <dbReference type="ChEBI" id="CHEBI:18248"/>
    </ligandPart>
</feature>
<feature type="binding site" description="axial binding residue" evidence="2">
    <location>
        <position position="182"/>
    </location>
    <ligand>
        <name>heme b</name>
        <dbReference type="ChEBI" id="CHEBI:60344"/>
        <label>b562</label>
    </ligand>
    <ligandPart>
        <name>Fe</name>
        <dbReference type="ChEBI" id="CHEBI:18248"/>
    </ligandPart>
</feature>
<feature type="binding site" description="axial binding residue" evidence="2">
    <location>
        <position position="196"/>
    </location>
    <ligand>
        <name>heme b</name>
        <dbReference type="ChEBI" id="CHEBI:60344"/>
        <label>b566</label>
    </ligand>
    <ligandPart>
        <name>Fe</name>
        <dbReference type="ChEBI" id="CHEBI:18248"/>
    </ligandPart>
</feature>
<feature type="binding site" evidence="2">
    <location>
        <position position="201"/>
    </location>
    <ligand>
        <name>a ubiquinone</name>
        <dbReference type="ChEBI" id="CHEBI:16389"/>
    </ligand>
</feature>
<organism>
    <name type="scientific">Caperea marginata</name>
    <name type="common">Pigmy right whale</name>
    <name type="synonym">Balaena marginata</name>
    <dbReference type="NCBI Taxonomy" id="27604"/>
    <lineage>
        <taxon>Eukaryota</taxon>
        <taxon>Metazoa</taxon>
        <taxon>Chordata</taxon>
        <taxon>Craniata</taxon>
        <taxon>Vertebrata</taxon>
        <taxon>Euteleostomi</taxon>
        <taxon>Mammalia</taxon>
        <taxon>Eutheria</taxon>
        <taxon>Laurasiatheria</taxon>
        <taxon>Artiodactyla</taxon>
        <taxon>Whippomorpha</taxon>
        <taxon>Cetacea</taxon>
        <taxon>Mysticeti</taxon>
        <taxon>Neobalaenidae</taxon>
        <taxon>Caperea</taxon>
    </lineage>
</organism>
<protein>
    <recommendedName>
        <fullName>Cytochrome b</fullName>
    </recommendedName>
    <alternativeName>
        <fullName>Complex III subunit 3</fullName>
    </alternativeName>
    <alternativeName>
        <fullName>Complex III subunit III</fullName>
    </alternativeName>
    <alternativeName>
        <fullName>Cytochrome b-c1 complex subunit 3</fullName>
    </alternativeName>
    <alternativeName>
        <fullName>Ubiquinol-cytochrome-c reductase complex cytochrome b subunit</fullName>
    </alternativeName>
</protein>
<reference key="1">
    <citation type="journal article" date="1994" name="Nature">
        <title>Relationship of baleen whales established by cytochrome b gene sequence comparison.</title>
        <authorList>
            <person name="Arnason U."/>
            <person name="Gullberg A."/>
        </authorList>
    </citation>
    <scope>NUCLEOTIDE SEQUENCE [GENOMIC DNA]</scope>
</reference>
<proteinExistence type="inferred from homology"/>
<keyword id="KW-0249">Electron transport</keyword>
<keyword id="KW-0349">Heme</keyword>
<keyword id="KW-0408">Iron</keyword>
<keyword id="KW-0472">Membrane</keyword>
<keyword id="KW-0479">Metal-binding</keyword>
<keyword id="KW-0496">Mitochondrion</keyword>
<keyword id="KW-0999">Mitochondrion inner membrane</keyword>
<keyword id="KW-0679">Respiratory chain</keyword>
<keyword id="KW-0812">Transmembrane</keyword>
<keyword id="KW-1133">Transmembrane helix</keyword>
<keyword id="KW-0813">Transport</keyword>
<keyword id="KW-0830">Ubiquinone</keyword>
<dbReference type="EMBL" id="X75586">
    <property type="protein sequence ID" value="CAA53262.1"/>
    <property type="molecule type" value="Genomic_DNA"/>
</dbReference>
<dbReference type="PIR" id="S43267">
    <property type="entry name" value="S43267"/>
</dbReference>
<dbReference type="RefSeq" id="NP_944632.1">
    <property type="nucleotide sequence ID" value="NC_005269.1"/>
</dbReference>
<dbReference type="SMR" id="P41287"/>
<dbReference type="GeneID" id="2658583"/>
<dbReference type="CTD" id="4519"/>
<dbReference type="GO" id="GO:0005743">
    <property type="term" value="C:mitochondrial inner membrane"/>
    <property type="evidence" value="ECO:0007669"/>
    <property type="project" value="UniProtKB-SubCell"/>
</dbReference>
<dbReference type="GO" id="GO:0045275">
    <property type="term" value="C:respiratory chain complex III"/>
    <property type="evidence" value="ECO:0007669"/>
    <property type="project" value="InterPro"/>
</dbReference>
<dbReference type="GO" id="GO:0046872">
    <property type="term" value="F:metal ion binding"/>
    <property type="evidence" value="ECO:0007669"/>
    <property type="project" value="UniProtKB-KW"/>
</dbReference>
<dbReference type="GO" id="GO:0008121">
    <property type="term" value="F:ubiquinol-cytochrome-c reductase activity"/>
    <property type="evidence" value="ECO:0007669"/>
    <property type="project" value="InterPro"/>
</dbReference>
<dbReference type="GO" id="GO:0006122">
    <property type="term" value="P:mitochondrial electron transport, ubiquinol to cytochrome c"/>
    <property type="evidence" value="ECO:0007669"/>
    <property type="project" value="TreeGrafter"/>
</dbReference>
<dbReference type="CDD" id="cd00290">
    <property type="entry name" value="cytochrome_b_C"/>
    <property type="match status" value="1"/>
</dbReference>
<dbReference type="CDD" id="cd00284">
    <property type="entry name" value="Cytochrome_b_N"/>
    <property type="match status" value="1"/>
</dbReference>
<dbReference type="FunFam" id="1.20.810.10:FF:000002">
    <property type="entry name" value="Cytochrome b"/>
    <property type="match status" value="1"/>
</dbReference>
<dbReference type="Gene3D" id="1.20.810.10">
    <property type="entry name" value="Cytochrome Bc1 Complex, Chain C"/>
    <property type="match status" value="1"/>
</dbReference>
<dbReference type="InterPro" id="IPR005798">
    <property type="entry name" value="Cyt_b/b6_C"/>
</dbReference>
<dbReference type="InterPro" id="IPR036150">
    <property type="entry name" value="Cyt_b/b6_C_sf"/>
</dbReference>
<dbReference type="InterPro" id="IPR005797">
    <property type="entry name" value="Cyt_b/b6_N"/>
</dbReference>
<dbReference type="InterPro" id="IPR027387">
    <property type="entry name" value="Cytb/b6-like_sf"/>
</dbReference>
<dbReference type="InterPro" id="IPR030689">
    <property type="entry name" value="Cytochrome_b"/>
</dbReference>
<dbReference type="InterPro" id="IPR048260">
    <property type="entry name" value="Cytochrome_b_C_euk/bac"/>
</dbReference>
<dbReference type="InterPro" id="IPR048259">
    <property type="entry name" value="Cytochrome_b_N_euk/bac"/>
</dbReference>
<dbReference type="InterPro" id="IPR016174">
    <property type="entry name" value="Di-haem_cyt_TM"/>
</dbReference>
<dbReference type="PANTHER" id="PTHR19271">
    <property type="entry name" value="CYTOCHROME B"/>
    <property type="match status" value="1"/>
</dbReference>
<dbReference type="PANTHER" id="PTHR19271:SF16">
    <property type="entry name" value="CYTOCHROME B"/>
    <property type="match status" value="1"/>
</dbReference>
<dbReference type="Pfam" id="PF00032">
    <property type="entry name" value="Cytochrom_B_C"/>
    <property type="match status" value="1"/>
</dbReference>
<dbReference type="Pfam" id="PF00033">
    <property type="entry name" value="Cytochrome_B"/>
    <property type="match status" value="1"/>
</dbReference>
<dbReference type="PIRSF" id="PIRSF038885">
    <property type="entry name" value="COB"/>
    <property type="match status" value="1"/>
</dbReference>
<dbReference type="SUPFAM" id="SSF81648">
    <property type="entry name" value="a domain/subunit of cytochrome bc1 complex (Ubiquinol-cytochrome c reductase)"/>
    <property type="match status" value="1"/>
</dbReference>
<dbReference type="SUPFAM" id="SSF81342">
    <property type="entry name" value="Transmembrane di-heme cytochromes"/>
    <property type="match status" value="1"/>
</dbReference>
<dbReference type="PROSITE" id="PS51003">
    <property type="entry name" value="CYTB_CTER"/>
    <property type="match status" value="1"/>
</dbReference>
<dbReference type="PROSITE" id="PS51002">
    <property type="entry name" value="CYTB_NTER"/>
    <property type="match status" value="1"/>
</dbReference>